<sequence length="511" mass="60524">MEELKGYLEIDRSRQQDFLYPLLFQEYIYALAHDHGLNGSILYEPIENLGYVGYDKKSSSLVVKRLITRMYQQKHLVFFDNDPNQNKFVDHKKNFYSQMISEGFAVIVEIPFSLRLVSSLEGKDITKSHNLRSIHSTFPFLEDQFSHLNHVLDILIPYPIHLELLIQLLRCWIQDAPSLHLLRVLLYEYQNWNSLITKKKKNFSVFSNENQRLFLFLYNFYVYECESIFVFLRKQSVHLRSTSSRAFLERTHFYRKIENFIVVFRNVFQTNLWLFKDPFMHYVRYQGKSILASKGTPLLMNKWKYYLVNFWQCHFYLWSQPDRIHINQLSNHSLDFLGHLSSVRLKTSVVRSQTLDNSFIIDIAIKKFDTIVPIIPLIGSLAKAKFCNVSGHPISKPAWTDSSDSDIIDRFGRICRNLSHYYSGSSKKNSLYRVKYILRLSCARTLSRKHKSTVRSFLKRLGSKLLEEFLTEEEQVLSLIFPRVSSSSRRLDKERIWYLDIIRINDLANHS</sequence>
<accession>Q09FY0</accession>
<name>MATK_NANDO</name>
<dbReference type="EMBL" id="DQ923117">
    <property type="protein sequence ID" value="ABI49844.1"/>
    <property type="molecule type" value="Genomic_DNA"/>
</dbReference>
<dbReference type="RefSeq" id="YP_740631.1">
    <property type="nucleotide sequence ID" value="NC_008336.1"/>
</dbReference>
<dbReference type="GeneID" id="4271617"/>
<dbReference type="GO" id="GO:0009507">
    <property type="term" value="C:chloroplast"/>
    <property type="evidence" value="ECO:0007669"/>
    <property type="project" value="UniProtKB-SubCell"/>
</dbReference>
<dbReference type="GO" id="GO:0003723">
    <property type="term" value="F:RNA binding"/>
    <property type="evidence" value="ECO:0007669"/>
    <property type="project" value="UniProtKB-KW"/>
</dbReference>
<dbReference type="GO" id="GO:0006397">
    <property type="term" value="P:mRNA processing"/>
    <property type="evidence" value="ECO:0007669"/>
    <property type="project" value="UniProtKB-KW"/>
</dbReference>
<dbReference type="GO" id="GO:0008380">
    <property type="term" value="P:RNA splicing"/>
    <property type="evidence" value="ECO:0007669"/>
    <property type="project" value="UniProtKB-UniRule"/>
</dbReference>
<dbReference type="GO" id="GO:0008033">
    <property type="term" value="P:tRNA processing"/>
    <property type="evidence" value="ECO:0007669"/>
    <property type="project" value="UniProtKB-KW"/>
</dbReference>
<dbReference type="HAMAP" id="MF_01390">
    <property type="entry name" value="MatK"/>
    <property type="match status" value="1"/>
</dbReference>
<dbReference type="InterPro" id="IPR024937">
    <property type="entry name" value="Domain_X"/>
</dbReference>
<dbReference type="InterPro" id="IPR002866">
    <property type="entry name" value="Maturase_MatK"/>
</dbReference>
<dbReference type="InterPro" id="IPR024942">
    <property type="entry name" value="Maturase_MatK_N"/>
</dbReference>
<dbReference type="PANTHER" id="PTHR34811">
    <property type="entry name" value="MATURASE K"/>
    <property type="match status" value="1"/>
</dbReference>
<dbReference type="PANTHER" id="PTHR34811:SF1">
    <property type="entry name" value="MATURASE K"/>
    <property type="match status" value="1"/>
</dbReference>
<dbReference type="Pfam" id="PF01348">
    <property type="entry name" value="Intron_maturas2"/>
    <property type="match status" value="1"/>
</dbReference>
<dbReference type="Pfam" id="PF01824">
    <property type="entry name" value="MatK_N"/>
    <property type="match status" value="1"/>
</dbReference>
<organism>
    <name type="scientific">Nandina domestica</name>
    <name type="common">Heavenly bamboo</name>
    <dbReference type="NCBI Taxonomy" id="41776"/>
    <lineage>
        <taxon>Eukaryota</taxon>
        <taxon>Viridiplantae</taxon>
        <taxon>Streptophyta</taxon>
        <taxon>Embryophyta</taxon>
        <taxon>Tracheophyta</taxon>
        <taxon>Spermatophyta</taxon>
        <taxon>Magnoliopsida</taxon>
        <taxon>Ranunculales</taxon>
        <taxon>Berberidaceae</taxon>
        <taxon>Nandinoideae</taxon>
        <taxon>Nandineae</taxon>
        <taxon>Nandina</taxon>
    </lineage>
</organism>
<evidence type="ECO:0000255" key="1">
    <source>
        <dbReference type="HAMAP-Rule" id="MF_01390"/>
    </source>
</evidence>
<feature type="chain" id="PRO_0000355948" description="Maturase K">
    <location>
        <begin position="1"/>
        <end position="511"/>
    </location>
</feature>
<gene>
    <name evidence="1" type="primary">matK</name>
</gene>
<geneLocation type="chloroplast"/>
<reference key="1">
    <citation type="journal article" date="2006" name="BMC Plant Biol.">
        <title>Rapid and accurate pyrosequencing of angiosperm plastid genomes.</title>
        <authorList>
            <person name="Moore M.J."/>
            <person name="Dhingra A."/>
            <person name="Soltis P.S."/>
            <person name="Shaw R."/>
            <person name="Farmerie W.G."/>
            <person name="Folta K.M."/>
            <person name="Soltis D.E."/>
        </authorList>
    </citation>
    <scope>NUCLEOTIDE SEQUENCE [LARGE SCALE GENOMIC DNA]</scope>
</reference>
<protein>
    <recommendedName>
        <fullName evidence="1">Maturase K</fullName>
    </recommendedName>
    <alternativeName>
        <fullName evidence="1">Intron maturase</fullName>
    </alternativeName>
</protein>
<comment type="function">
    <text evidence="1">Usually encoded in the trnK tRNA gene intron. Probably assists in splicing its own and other chloroplast group II introns.</text>
</comment>
<comment type="subcellular location">
    <subcellularLocation>
        <location>Plastid</location>
        <location>Chloroplast</location>
    </subcellularLocation>
</comment>
<comment type="similarity">
    <text evidence="1">Belongs to the intron maturase 2 family. MatK subfamily.</text>
</comment>
<proteinExistence type="inferred from homology"/>
<keyword id="KW-0150">Chloroplast</keyword>
<keyword id="KW-0507">mRNA processing</keyword>
<keyword id="KW-0934">Plastid</keyword>
<keyword id="KW-0694">RNA-binding</keyword>
<keyword id="KW-0819">tRNA processing</keyword>